<organism>
    <name type="scientific">Rickettsia typhi (strain ATCC VR-144 / Wilmington)</name>
    <dbReference type="NCBI Taxonomy" id="257363"/>
    <lineage>
        <taxon>Bacteria</taxon>
        <taxon>Pseudomonadati</taxon>
        <taxon>Pseudomonadota</taxon>
        <taxon>Alphaproteobacteria</taxon>
        <taxon>Rickettsiales</taxon>
        <taxon>Rickettsiaceae</taxon>
        <taxon>Rickettsieae</taxon>
        <taxon>Rickettsia</taxon>
        <taxon>typhus group</taxon>
    </lineage>
</organism>
<comment type="function">
    <text evidence="1">One of the primary rRNA binding proteins, it binds directly near the 3'-end of the 23S rRNA, where it nucleates assembly of the 50S subunit.</text>
</comment>
<comment type="subunit">
    <text evidence="1">Part of the 50S ribosomal subunit. Forms a cluster with proteins L14 and L19.</text>
</comment>
<comment type="PTM">
    <text evidence="1">Methylated by PrmB.</text>
</comment>
<comment type="similarity">
    <text evidence="1">Belongs to the universal ribosomal protein uL3 family.</text>
</comment>
<evidence type="ECO:0000255" key="1">
    <source>
        <dbReference type="HAMAP-Rule" id="MF_01325"/>
    </source>
</evidence>
<evidence type="ECO:0000256" key="2">
    <source>
        <dbReference type="SAM" id="MobiDB-lite"/>
    </source>
</evidence>
<evidence type="ECO:0000305" key="3"/>
<dbReference type="EMBL" id="AE017197">
    <property type="protein sequence ID" value="AAU04114.1"/>
    <property type="molecule type" value="Genomic_DNA"/>
</dbReference>
<dbReference type="RefSeq" id="WP_011191091.1">
    <property type="nucleotide sequence ID" value="NC_006142.1"/>
</dbReference>
<dbReference type="SMR" id="Q68W78"/>
<dbReference type="KEGG" id="rty:RT0651"/>
<dbReference type="eggNOG" id="COG0087">
    <property type="taxonomic scope" value="Bacteria"/>
</dbReference>
<dbReference type="HOGENOM" id="CLU_044142_2_0_5"/>
<dbReference type="OrthoDB" id="9806135at2"/>
<dbReference type="Proteomes" id="UP000000604">
    <property type="component" value="Chromosome"/>
</dbReference>
<dbReference type="GO" id="GO:1990904">
    <property type="term" value="C:ribonucleoprotein complex"/>
    <property type="evidence" value="ECO:0007669"/>
    <property type="project" value="UniProtKB-KW"/>
</dbReference>
<dbReference type="GO" id="GO:0005840">
    <property type="term" value="C:ribosome"/>
    <property type="evidence" value="ECO:0007669"/>
    <property type="project" value="UniProtKB-KW"/>
</dbReference>
<dbReference type="GO" id="GO:0019843">
    <property type="term" value="F:rRNA binding"/>
    <property type="evidence" value="ECO:0007669"/>
    <property type="project" value="UniProtKB-UniRule"/>
</dbReference>
<dbReference type="GO" id="GO:0003735">
    <property type="term" value="F:structural constituent of ribosome"/>
    <property type="evidence" value="ECO:0007669"/>
    <property type="project" value="InterPro"/>
</dbReference>
<dbReference type="GO" id="GO:0006412">
    <property type="term" value="P:translation"/>
    <property type="evidence" value="ECO:0007669"/>
    <property type="project" value="UniProtKB-UniRule"/>
</dbReference>
<dbReference type="FunFam" id="2.40.30.10:FF:000004">
    <property type="entry name" value="50S ribosomal protein L3"/>
    <property type="match status" value="1"/>
</dbReference>
<dbReference type="Gene3D" id="3.30.160.810">
    <property type="match status" value="1"/>
</dbReference>
<dbReference type="Gene3D" id="2.40.30.10">
    <property type="entry name" value="Translation factors"/>
    <property type="match status" value="1"/>
</dbReference>
<dbReference type="HAMAP" id="MF_01325_B">
    <property type="entry name" value="Ribosomal_uL3_B"/>
    <property type="match status" value="1"/>
</dbReference>
<dbReference type="InterPro" id="IPR000597">
    <property type="entry name" value="Ribosomal_uL3"/>
</dbReference>
<dbReference type="InterPro" id="IPR019927">
    <property type="entry name" value="Ribosomal_uL3_bac/org-type"/>
</dbReference>
<dbReference type="InterPro" id="IPR019926">
    <property type="entry name" value="Ribosomal_uL3_CS"/>
</dbReference>
<dbReference type="InterPro" id="IPR009000">
    <property type="entry name" value="Transl_B-barrel_sf"/>
</dbReference>
<dbReference type="NCBIfam" id="TIGR03625">
    <property type="entry name" value="L3_bact"/>
    <property type="match status" value="1"/>
</dbReference>
<dbReference type="PANTHER" id="PTHR11229">
    <property type="entry name" value="50S RIBOSOMAL PROTEIN L3"/>
    <property type="match status" value="1"/>
</dbReference>
<dbReference type="PANTHER" id="PTHR11229:SF16">
    <property type="entry name" value="LARGE RIBOSOMAL SUBUNIT PROTEIN UL3C"/>
    <property type="match status" value="1"/>
</dbReference>
<dbReference type="Pfam" id="PF00297">
    <property type="entry name" value="Ribosomal_L3"/>
    <property type="match status" value="1"/>
</dbReference>
<dbReference type="SUPFAM" id="SSF50447">
    <property type="entry name" value="Translation proteins"/>
    <property type="match status" value="1"/>
</dbReference>
<dbReference type="PROSITE" id="PS00474">
    <property type="entry name" value="RIBOSOMAL_L3"/>
    <property type="match status" value="1"/>
</dbReference>
<gene>
    <name evidence="1" type="primary">rplC</name>
    <name type="ordered locus">RT0651</name>
</gene>
<reference key="1">
    <citation type="journal article" date="2004" name="J. Bacteriol.">
        <title>Complete genome sequence of Rickettsia typhi and comparison with sequences of other Rickettsiae.</title>
        <authorList>
            <person name="McLeod M.P."/>
            <person name="Qin X."/>
            <person name="Karpathy S.E."/>
            <person name="Gioia J."/>
            <person name="Highlander S.K."/>
            <person name="Fox G.E."/>
            <person name="McNeill T.Z."/>
            <person name="Jiang H."/>
            <person name="Muzny D."/>
            <person name="Jacob L.S."/>
            <person name="Hawes A.C."/>
            <person name="Sodergren E."/>
            <person name="Gill R."/>
            <person name="Hume J."/>
            <person name="Morgan M."/>
            <person name="Fan G."/>
            <person name="Amin A.G."/>
            <person name="Gibbs R.A."/>
            <person name="Hong C."/>
            <person name="Yu X.-J."/>
            <person name="Walker D.H."/>
            <person name="Weinstock G.M."/>
        </authorList>
    </citation>
    <scope>NUCLEOTIDE SEQUENCE [LARGE SCALE GENOMIC DNA]</scope>
    <source>
        <strain>ATCC VR-144 / Wilmington</strain>
    </source>
</reference>
<keyword id="KW-0488">Methylation</keyword>
<keyword id="KW-0687">Ribonucleoprotein</keyword>
<keyword id="KW-0689">Ribosomal protein</keyword>
<keyword id="KW-0694">RNA-binding</keyword>
<keyword id="KW-0699">rRNA-binding</keyword>
<feature type="chain" id="PRO_0000241404" description="Large ribosomal subunit protein uL3">
    <location>
        <begin position="1"/>
        <end position="215"/>
    </location>
</feature>
<feature type="region of interest" description="Disordered" evidence="2">
    <location>
        <begin position="136"/>
        <end position="155"/>
    </location>
</feature>
<feature type="modified residue" description="N5-methylglutamine" evidence="1">
    <location>
        <position position="151"/>
    </location>
</feature>
<proteinExistence type="inferred from homology"/>
<name>RL3_RICTY</name>
<sequence>MRTGIIAQKIGMTSVFNDKGERISLTLVKVDGCQVVGHKTLAKHGYNALVIGVKDQKISRVTKPMKQVFANAKISPKTKLKEFRISEDNFIDIASILEVDHFSVGQFVDITATTIGKGFAGSMKRHNFRGLEASHGVSISHRSHGSTGQRQDPGKVFKGKKMAGHMGCNQVTIQNLKIFAIDTNRKLIMIQGSIPGHKNSYLLVKDAIKKASITI</sequence>
<accession>Q68W78</accession>
<protein>
    <recommendedName>
        <fullName evidence="1">Large ribosomal subunit protein uL3</fullName>
    </recommendedName>
    <alternativeName>
        <fullName evidence="3">50S ribosomal protein L3</fullName>
    </alternativeName>
</protein>